<gene>
    <name evidence="1" type="primary">sthA</name>
    <name type="ordered locus">PSPPH_1856</name>
</gene>
<dbReference type="EC" id="1.6.1.1" evidence="1"/>
<dbReference type="EMBL" id="CP000058">
    <property type="protein sequence ID" value="AAZ34919.1"/>
    <property type="molecule type" value="Genomic_DNA"/>
</dbReference>
<dbReference type="RefSeq" id="WP_004664563.1">
    <property type="nucleotide sequence ID" value="NC_005773.3"/>
</dbReference>
<dbReference type="SMR" id="Q48KI8"/>
<dbReference type="KEGG" id="psp:PSPPH_1856"/>
<dbReference type="eggNOG" id="COG1249">
    <property type="taxonomic scope" value="Bacteria"/>
</dbReference>
<dbReference type="HOGENOM" id="CLU_016755_0_0_6"/>
<dbReference type="Proteomes" id="UP000000551">
    <property type="component" value="Chromosome"/>
</dbReference>
<dbReference type="GO" id="GO:0005829">
    <property type="term" value="C:cytosol"/>
    <property type="evidence" value="ECO:0007669"/>
    <property type="project" value="TreeGrafter"/>
</dbReference>
<dbReference type="GO" id="GO:0004148">
    <property type="term" value="F:dihydrolipoyl dehydrogenase (NADH) activity"/>
    <property type="evidence" value="ECO:0007669"/>
    <property type="project" value="TreeGrafter"/>
</dbReference>
<dbReference type="GO" id="GO:0050660">
    <property type="term" value="F:flavin adenine dinucleotide binding"/>
    <property type="evidence" value="ECO:0007669"/>
    <property type="project" value="TreeGrafter"/>
</dbReference>
<dbReference type="GO" id="GO:0003957">
    <property type="term" value="F:NAD(P)+ transhydrogenase (Si-specific) activity"/>
    <property type="evidence" value="ECO:0007669"/>
    <property type="project" value="UniProtKB-UniRule"/>
</dbReference>
<dbReference type="GO" id="GO:0006103">
    <property type="term" value="P:2-oxoglutarate metabolic process"/>
    <property type="evidence" value="ECO:0007669"/>
    <property type="project" value="TreeGrafter"/>
</dbReference>
<dbReference type="GO" id="GO:0006739">
    <property type="term" value="P:NADP metabolic process"/>
    <property type="evidence" value="ECO:0007669"/>
    <property type="project" value="UniProtKB-UniRule"/>
</dbReference>
<dbReference type="FunFam" id="3.30.390.30:FF:000002">
    <property type="entry name" value="Soluble pyridine nucleotide transhydrogenase"/>
    <property type="match status" value="1"/>
</dbReference>
<dbReference type="FunFam" id="3.50.50.60:FF:000008">
    <property type="entry name" value="Soluble pyridine nucleotide transhydrogenase"/>
    <property type="match status" value="1"/>
</dbReference>
<dbReference type="Gene3D" id="3.30.390.30">
    <property type="match status" value="1"/>
</dbReference>
<dbReference type="Gene3D" id="3.50.50.60">
    <property type="entry name" value="FAD/NAD(P)-binding domain"/>
    <property type="match status" value="2"/>
</dbReference>
<dbReference type="HAMAP" id="MF_00247">
    <property type="entry name" value="SthA"/>
    <property type="match status" value="1"/>
</dbReference>
<dbReference type="InterPro" id="IPR050151">
    <property type="entry name" value="Class-I_Pyr_Nuc-Dis_Oxidored"/>
</dbReference>
<dbReference type="InterPro" id="IPR036188">
    <property type="entry name" value="FAD/NAD-bd_sf"/>
</dbReference>
<dbReference type="InterPro" id="IPR023753">
    <property type="entry name" value="FAD/NAD-binding_dom"/>
</dbReference>
<dbReference type="InterPro" id="IPR016156">
    <property type="entry name" value="FAD/NAD-linked_Rdtase_dimer_sf"/>
</dbReference>
<dbReference type="InterPro" id="IPR001100">
    <property type="entry name" value="Pyr_nuc-diS_OxRdtase"/>
</dbReference>
<dbReference type="InterPro" id="IPR004099">
    <property type="entry name" value="Pyr_nucl-diS_OxRdtase_dimer"/>
</dbReference>
<dbReference type="InterPro" id="IPR022962">
    <property type="entry name" value="STH_gammaproteobact"/>
</dbReference>
<dbReference type="NCBIfam" id="NF003585">
    <property type="entry name" value="PRK05249.1"/>
    <property type="match status" value="1"/>
</dbReference>
<dbReference type="PANTHER" id="PTHR22912">
    <property type="entry name" value="DISULFIDE OXIDOREDUCTASE"/>
    <property type="match status" value="1"/>
</dbReference>
<dbReference type="PANTHER" id="PTHR22912:SF93">
    <property type="entry name" value="SOLUBLE PYRIDINE NUCLEOTIDE TRANSHYDROGENASE"/>
    <property type="match status" value="1"/>
</dbReference>
<dbReference type="Pfam" id="PF07992">
    <property type="entry name" value="Pyr_redox_2"/>
    <property type="match status" value="1"/>
</dbReference>
<dbReference type="Pfam" id="PF02852">
    <property type="entry name" value="Pyr_redox_dim"/>
    <property type="match status" value="1"/>
</dbReference>
<dbReference type="PIRSF" id="PIRSF000350">
    <property type="entry name" value="Mercury_reductase_MerA"/>
    <property type="match status" value="1"/>
</dbReference>
<dbReference type="PRINTS" id="PR00368">
    <property type="entry name" value="FADPNR"/>
</dbReference>
<dbReference type="PRINTS" id="PR00411">
    <property type="entry name" value="PNDRDTASEI"/>
</dbReference>
<dbReference type="SUPFAM" id="SSF51905">
    <property type="entry name" value="FAD/NAD(P)-binding domain"/>
    <property type="match status" value="1"/>
</dbReference>
<dbReference type="SUPFAM" id="SSF55424">
    <property type="entry name" value="FAD/NAD-linked reductases, dimerisation (C-terminal) domain"/>
    <property type="match status" value="1"/>
</dbReference>
<comment type="function">
    <text evidence="1">Conversion of NADPH, generated by peripheral catabolic pathways, to NADH, which can enter the respiratory chain for energy generation.</text>
</comment>
<comment type="catalytic activity">
    <reaction evidence="1">
        <text>NAD(+) + NADPH = NADH + NADP(+)</text>
        <dbReference type="Rhea" id="RHEA:11692"/>
        <dbReference type="ChEBI" id="CHEBI:57540"/>
        <dbReference type="ChEBI" id="CHEBI:57783"/>
        <dbReference type="ChEBI" id="CHEBI:57945"/>
        <dbReference type="ChEBI" id="CHEBI:58349"/>
        <dbReference type="EC" id="1.6.1.1"/>
    </reaction>
</comment>
<comment type="cofactor">
    <cofactor evidence="1">
        <name>FAD</name>
        <dbReference type="ChEBI" id="CHEBI:57692"/>
    </cofactor>
    <text evidence="1">Binds 1 FAD per subunit.</text>
</comment>
<comment type="subcellular location">
    <subcellularLocation>
        <location evidence="1">Cytoplasm</location>
    </subcellularLocation>
</comment>
<comment type="similarity">
    <text evidence="1">Belongs to the class-I pyridine nucleotide-disulfide oxidoreductase family.</text>
</comment>
<protein>
    <recommendedName>
        <fullName evidence="1">Soluble pyridine nucleotide transhydrogenase</fullName>
        <shortName evidence="1">STH</shortName>
        <ecNumber evidence="1">1.6.1.1</ecNumber>
    </recommendedName>
    <alternativeName>
        <fullName evidence="1">NAD(P)(+) transhydrogenase [B-specific]</fullName>
    </alternativeName>
</protein>
<organism>
    <name type="scientific">Pseudomonas savastanoi pv. phaseolicola (strain 1448A / Race 6)</name>
    <name type="common">Pseudomonas syringae pv. phaseolicola (strain 1448A / Race 6)</name>
    <dbReference type="NCBI Taxonomy" id="264730"/>
    <lineage>
        <taxon>Bacteria</taxon>
        <taxon>Pseudomonadati</taxon>
        <taxon>Pseudomonadota</taxon>
        <taxon>Gammaproteobacteria</taxon>
        <taxon>Pseudomonadales</taxon>
        <taxon>Pseudomonadaceae</taxon>
        <taxon>Pseudomonas</taxon>
    </lineage>
</organism>
<feature type="chain" id="PRO_0000260240" description="Soluble pyridine nucleotide transhydrogenase">
    <location>
        <begin position="1"/>
        <end position="464"/>
    </location>
</feature>
<feature type="binding site" evidence="1">
    <location>
        <begin position="35"/>
        <end position="44"/>
    </location>
    <ligand>
        <name>FAD</name>
        <dbReference type="ChEBI" id="CHEBI:57692"/>
    </ligand>
</feature>
<evidence type="ECO:0000255" key="1">
    <source>
        <dbReference type="HAMAP-Rule" id="MF_00247"/>
    </source>
</evidence>
<name>STHA_PSE14</name>
<proteinExistence type="inferred from homology"/>
<keyword id="KW-0963">Cytoplasm</keyword>
<keyword id="KW-0274">FAD</keyword>
<keyword id="KW-0285">Flavoprotein</keyword>
<keyword id="KW-0520">NAD</keyword>
<keyword id="KW-0521">NADP</keyword>
<keyword id="KW-0560">Oxidoreductase</keyword>
<sequence length="464" mass="50796">MAVYNYDVVVLGSGPAGEGAAMNAAKAGRKVAMVDSRRQVGGNCTHLGTIPSKALRHSVKQIIQFNTNPMFRAIGEPRWFSFPDVLKNAEMVISKQVASRTSYYARNRVDVFFGTGSFADETSVNVVCSNGVVEKLVANQIIIATGSRPYRPADIDFSHKRIYDSDTILSLGHTPRKLIIYGAGVIGCEYASIFSGLGVLVELVDNRDQLLSFLDSEISQALSYHFSNNNVMVRHNEEYERVEGLDNGVILHLKSGKKIKADALLWCNGRTGNTDKLGLENIGLKANGRGQIEVDENYRTSVSNVYGAGDVIGWPSLASAAYDQGRSAAGSMVDNGSWRYVNDVPTGIYTIPEISSIGKNEHELTQAKVPYEVGKAFFKGMARAQISGERVGMLKILFHRETLEVLGVHCFGDQASEIVHIGQAIMSQPGEANTMKYFVNTTFNYPTMAEAYRVAAYDGLNRLF</sequence>
<reference key="1">
    <citation type="journal article" date="2005" name="J. Bacteriol.">
        <title>Whole-genome sequence analysis of Pseudomonas syringae pv. phaseolicola 1448A reveals divergence among pathovars in genes involved in virulence and transposition.</title>
        <authorList>
            <person name="Joardar V."/>
            <person name="Lindeberg M."/>
            <person name="Jackson R.W."/>
            <person name="Selengut J."/>
            <person name="Dodson R."/>
            <person name="Brinkac L.M."/>
            <person name="Daugherty S.C."/>
            <person name="DeBoy R.T."/>
            <person name="Durkin A.S."/>
            <person name="Gwinn Giglio M."/>
            <person name="Madupu R."/>
            <person name="Nelson W.C."/>
            <person name="Rosovitz M.J."/>
            <person name="Sullivan S.A."/>
            <person name="Crabtree J."/>
            <person name="Creasy T."/>
            <person name="Davidsen T.M."/>
            <person name="Haft D.H."/>
            <person name="Zafar N."/>
            <person name="Zhou L."/>
            <person name="Halpin R."/>
            <person name="Holley T."/>
            <person name="Khouri H.M."/>
            <person name="Feldblyum T.V."/>
            <person name="White O."/>
            <person name="Fraser C.M."/>
            <person name="Chatterjee A.K."/>
            <person name="Cartinhour S."/>
            <person name="Schneider D."/>
            <person name="Mansfield J.W."/>
            <person name="Collmer A."/>
            <person name="Buell R."/>
        </authorList>
    </citation>
    <scope>NUCLEOTIDE SEQUENCE [LARGE SCALE GENOMIC DNA]</scope>
    <source>
        <strain>1448A / Race 6</strain>
    </source>
</reference>
<accession>Q48KI8</accession>